<sequence>MDIELPYLAEYARTGRATCKGCKSTISKDTLRIAVMVQSAFHDAKVPNWFHKTCFFKNQRPSSVGDIQNIGNLRFADQKELTDLVENIQEVISAQLGKKRSKAFNLALKDFGIEYAKSSRSTCRGCEQKINKDLVRLRKTVYDTEVGMKYGGQPLWHHLECFAQLRSELGWFASGEDMPGFQSLADDDQAKVKNAIPPIKSEELPDTKRAKMELSDTNEEGEKKQRLKDQNDAYFRFRDDIKNKMKKKDIDILLKFNNQQPVTGDTEKLFDQTADLLTFGAIESCSECNSCQFIVNKSGYICNGNHSEWTKCNKLLKEPTRSACIVPKELKALYNFLNTVKEIPSTRIFNNFPPNKSTFSRSLLKTNKNNDVLVRPTIPRISPPLYNLKFSIIGLKNQHKELRKRIENLGGKFEVKISENTIAIISTELEIQKKSTRMKFAEELGIHIVPIEFLDFVEADTEGAIKYINSTCICSWGTDPKSRIPKETTKSLNSNSIYTKSMPVSRTFKVKDGLAVDPDSGLEDIAHVYVDSNNKYSVVLGLTDIQRNKNSYYKVQLLKADKKEKYWIFRSWGRIGTNIGNSKLEEFDTSESAKRNFKEIYADKTGNEYEQRDNFVKRTGRMYPIEIQYDDDQKLVKHESHFFTSKLEISVQNLIKLIFDIDSMNKTLMEFHIDMDKMPLGKLSAHQIQSAYRVVKEIYNVLECGSNTAKLIDATNRFYTLIPHNFGVQLPTLIETHQQIEDLRQMLDSLAEIEVAYSIIKSEDVSDACNPLDNHYAQIKTQLVALDKNSEEFSILSQYVKNTHASTHKSYDLKIVDVFKVSRQGEARRFKPFKKLHNRKLLWHGSRLTNFVGILSHGLRIAPPEAPPTGYMFGKGIYFADMVSKSANYCCTSQQNSTGLMLLSEVALGDMMECTSAKYINKLSNNKHSCFGRGRTMPDPTKSYIRSDGVEIPYGETITDEHLKSSLLYNEYIVYDVAQVNIQYLFRMEFKYSY</sequence>
<reference key="1">
    <citation type="journal article" date="1993" name="Proc. Natl. Acad. Sci. U.S.A.">
        <title>Cloning of cDNA encoding Drosophila poly(ADP-ribose) polymerase: leucine zipper in the auto-modification domain.</title>
        <authorList>
            <person name="Uchida K."/>
            <person name="Hanai S."/>
            <person name="Ishikawa K."/>
            <person name="Ozawa Y."/>
            <person name="Uchida M."/>
            <person name="Sugimura T."/>
            <person name="Miwa M."/>
        </authorList>
    </citation>
    <scope>NUCLEOTIDE SEQUENCE [MRNA] (ISOFORM II)</scope>
    <source>
        <tissue>Embryo</tissue>
    </source>
</reference>
<reference key="2">
    <citation type="journal article" date="1998" name="J. Biol. Chem.">
        <title>Genomic organization of Drosophila poly(ADP-ribose) polymerase and distribution of its mRNA during development.</title>
        <authorList>
            <person name="Hanai S."/>
            <person name="Uchida M."/>
            <person name="Kobayashi S."/>
            <person name="Miwa M."/>
            <person name="Uchida K."/>
        </authorList>
    </citation>
    <scope>NUCLEOTIDE SEQUENCE [GENOMIC DNA]</scope>
    <scope>ALTERNATIVE SPLICING (ISOFORMS I AND II)</scope>
    <scope>TISSUE SPECIFICITY</scope>
    <scope>DEVELOPMENTAL STAGE</scope>
    <source>
        <strain>Canton-S</strain>
    </source>
</reference>
<reference key="3">
    <citation type="journal article" date="2002" name="Genes Dev.">
        <title>The Drosophila heterochromatic gene encoding poly(ADP-ribose) polymerase (PARP) is required to modulate chromatin structure during development.</title>
        <authorList>
            <person name="Tulin A."/>
            <person name="Stewart D."/>
            <person name="Spradling A.C."/>
        </authorList>
    </citation>
    <scope>NUCLEOTIDE SEQUENCE [MRNA] (ISOFORM E)</scope>
    <scope>FUNCTION</scope>
    <scope>SUBCELLULAR LOCATION</scope>
    <scope>DEVELOPMENTAL STAGE</scope>
</reference>
<reference key="4">
    <citation type="journal article" date="2000" name="Science">
        <title>The genome sequence of Drosophila melanogaster.</title>
        <authorList>
            <person name="Adams M.D."/>
            <person name="Celniker S.E."/>
            <person name="Holt R.A."/>
            <person name="Evans C.A."/>
            <person name="Gocayne J.D."/>
            <person name="Amanatides P.G."/>
            <person name="Scherer S.E."/>
            <person name="Li P.W."/>
            <person name="Hoskins R.A."/>
            <person name="Galle R.F."/>
            <person name="George R.A."/>
            <person name="Lewis S.E."/>
            <person name="Richards S."/>
            <person name="Ashburner M."/>
            <person name="Henderson S.N."/>
            <person name="Sutton G.G."/>
            <person name="Wortman J.R."/>
            <person name="Yandell M.D."/>
            <person name="Zhang Q."/>
            <person name="Chen L.X."/>
            <person name="Brandon R.C."/>
            <person name="Rogers Y.-H.C."/>
            <person name="Blazej R.G."/>
            <person name="Champe M."/>
            <person name="Pfeiffer B.D."/>
            <person name="Wan K.H."/>
            <person name="Doyle C."/>
            <person name="Baxter E.G."/>
            <person name="Helt G."/>
            <person name="Nelson C.R."/>
            <person name="Miklos G.L.G."/>
            <person name="Abril J.F."/>
            <person name="Agbayani A."/>
            <person name="An H.-J."/>
            <person name="Andrews-Pfannkoch C."/>
            <person name="Baldwin D."/>
            <person name="Ballew R.M."/>
            <person name="Basu A."/>
            <person name="Baxendale J."/>
            <person name="Bayraktaroglu L."/>
            <person name="Beasley E.M."/>
            <person name="Beeson K.Y."/>
            <person name="Benos P.V."/>
            <person name="Berman B.P."/>
            <person name="Bhandari D."/>
            <person name="Bolshakov S."/>
            <person name="Borkova D."/>
            <person name="Botchan M.R."/>
            <person name="Bouck J."/>
            <person name="Brokstein P."/>
            <person name="Brottier P."/>
            <person name="Burtis K.C."/>
            <person name="Busam D.A."/>
            <person name="Butler H."/>
            <person name="Cadieu E."/>
            <person name="Center A."/>
            <person name="Chandra I."/>
            <person name="Cherry J.M."/>
            <person name="Cawley S."/>
            <person name="Dahlke C."/>
            <person name="Davenport L.B."/>
            <person name="Davies P."/>
            <person name="de Pablos B."/>
            <person name="Delcher A."/>
            <person name="Deng Z."/>
            <person name="Mays A.D."/>
            <person name="Dew I."/>
            <person name="Dietz S.M."/>
            <person name="Dodson K."/>
            <person name="Doup L.E."/>
            <person name="Downes M."/>
            <person name="Dugan-Rocha S."/>
            <person name="Dunkov B.C."/>
            <person name="Dunn P."/>
            <person name="Durbin K.J."/>
            <person name="Evangelista C.C."/>
            <person name="Ferraz C."/>
            <person name="Ferriera S."/>
            <person name="Fleischmann W."/>
            <person name="Fosler C."/>
            <person name="Gabrielian A.E."/>
            <person name="Garg N.S."/>
            <person name="Gelbart W.M."/>
            <person name="Glasser K."/>
            <person name="Glodek A."/>
            <person name="Gong F."/>
            <person name="Gorrell J.H."/>
            <person name="Gu Z."/>
            <person name="Guan P."/>
            <person name="Harris M."/>
            <person name="Harris N.L."/>
            <person name="Harvey D.A."/>
            <person name="Heiman T.J."/>
            <person name="Hernandez J.R."/>
            <person name="Houck J."/>
            <person name="Hostin D."/>
            <person name="Houston K.A."/>
            <person name="Howland T.J."/>
            <person name="Wei M.-H."/>
            <person name="Ibegwam C."/>
            <person name="Jalali M."/>
            <person name="Kalush F."/>
            <person name="Karpen G.H."/>
            <person name="Ke Z."/>
            <person name="Kennison J.A."/>
            <person name="Ketchum K.A."/>
            <person name="Kimmel B.E."/>
            <person name="Kodira C.D."/>
            <person name="Kraft C.L."/>
            <person name="Kravitz S."/>
            <person name="Kulp D."/>
            <person name="Lai Z."/>
            <person name="Lasko P."/>
            <person name="Lei Y."/>
            <person name="Levitsky A.A."/>
            <person name="Li J.H."/>
            <person name="Li Z."/>
            <person name="Liang Y."/>
            <person name="Lin X."/>
            <person name="Liu X."/>
            <person name="Mattei B."/>
            <person name="McIntosh T.C."/>
            <person name="McLeod M.P."/>
            <person name="McPherson D."/>
            <person name="Merkulov G."/>
            <person name="Milshina N.V."/>
            <person name="Mobarry C."/>
            <person name="Morris J."/>
            <person name="Moshrefi A."/>
            <person name="Mount S.M."/>
            <person name="Moy M."/>
            <person name="Murphy B."/>
            <person name="Murphy L."/>
            <person name="Muzny D.M."/>
            <person name="Nelson D.L."/>
            <person name="Nelson D.R."/>
            <person name="Nelson K.A."/>
            <person name="Nixon K."/>
            <person name="Nusskern D.R."/>
            <person name="Pacleb J.M."/>
            <person name="Palazzolo M."/>
            <person name="Pittman G.S."/>
            <person name="Pan S."/>
            <person name="Pollard J."/>
            <person name="Puri V."/>
            <person name="Reese M.G."/>
            <person name="Reinert K."/>
            <person name="Remington K."/>
            <person name="Saunders R.D.C."/>
            <person name="Scheeler F."/>
            <person name="Shen H."/>
            <person name="Shue B.C."/>
            <person name="Siden-Kiamos I."/>
            <person name="Simpson M."/>
            <person name="Skupski M.P."/>
            <person name="Smith T.J."/>
            <person name="Spier E."/>
            <person name="Spradling A.C."/>
            <person name="Stapleton M."/>
            <person name="Strong R."/>
            <person name="Sun E."/>
            <person name="Svirskas R."/>
            <person name="Tector C."/>
            <person name="Turner R."/>
            <person name="Venter E."/>
            <person name="Wang A.H."/>
            <person name="Wang X."/>
            <person name="Wang Z.-Y."/>
            <person name="Wassarman D.A."/>
            <person name="Weinstock G.M."/>
            <person name="Weissenbach J."/>
            <person name="Williams S.M."/>
            <person name="Woodage T."/>
            <person name="Worley K.C."/>
            <person name="Wu D."/>
            <person name="Yang S."/>
            <person name="Yao Q.A."/>
            <person name="Ye J."/>
            <person name="Yeh R.-F."/>
            <person name="Zaveri J.S."/>
            <person name="Zhan M."/>
            <person name="Zhang G."/>
            <person name="Zhao Q."/>
            <person name="Zheng L."/>
            <person name="Zheng X.H."/>
            <person name="Zhong F.N."/>
            <person name="Zhong W."/>
            <person name="Zhou X."/>
            <person name="Zhu S.C."/>
            <person name="Zhu X."/>
            <person name="Smith H.O."/>
            <person name="Gibbs R.A."/>
            <person name="Myers E.W."/>
            <person name="Rubin G.M."/>
            <person name="Venter J.C."/>
        </authorList>
    </citation>
    <scope>NUCLEOTIDE SEQUENCE [LARGE SCALE GENOMIC DNA]</scope>
    <source>
        <strain>Berkeley</strain>
    </source>
</reference>
<reference key="5">
    <citation type="journal article" date="2002" name="Genome Biol.">
        <title>Annotation of the Drosophila melanogaster euchromatic genome: a systematic review.</title>
        <authorList>
            <person name="Misra S."/>
            <person name="Crosby M.A."/>
            <person name="Mungall C.J."/>
            <person name="Matthews B.B."/>
            <person name="Campbell K.S."/>
            <person name="Hradecky P."/>
            <person name="Huang Y."/>
            <person name="Kaminker J.S."/>
            <person name="Millburn G.H."/>
            <person name="Prochnik S.E."/>
            <person name="Smith C.D."/>
            <person name="Tupy J.L."/>
            <person name="Whitfield E.J."/>
            <person name="Bayraktaroglu L."/>
            <person name="Berman B.P."/>
            <person name="Bettencourt B.R."/>
            <person name="Celniker S.E."/>
            <person name="de Grey A.D.N.J."/>
            <person name="Drysdale R.A."/>
            <person name="Harris N.L."/>
            <person name="Richter J."/>
            <person name="Russo S."/>
            <person name="Schroeder A.J."/>
            <person name="Shu S.Q."/>
            <person name="Stapleton M."/>
            <person name="Yamada C."/>
            <person name="Ashburner M."/>
            <person name="Gelbart W.M."/>
            <person name="Rubin G.M."/>
            <person name="Lewis S.E."/>
        </authorList>
    </citation>
    <scope>GENOME REANNOTATION</scope>
    <source>
        <strain>Berkeley</strain>
    </source>
</reference>
<reference key="6">
    <citation type="submission" date="2004-08" db="EMBL/GenBank/DDBJ databases">
        <authorList>
            <person name="Stapleton M."/>
            <person name="Carlson J.W."/>
            <person name="Chavez C."/>
            <person name="Frise E."/>
            <person name="George R.A."/>
            <person name="Pacleb J.M."/>
            <person name="Park S."/>
            <person name="Wan K.H."/>
            <person name="Yu C."/>
            <person name="Rubin G.M."/>
            <person name="Celniker S.E."/>
        </authorList>
    </citation>
    <scope>NUCLEOTIDE SEQUENCE [LARGE SCALE MRNA] (ISOFORM II)</scope>
    <source>
        <strain>Berkeley</strain>
        <tissue>Embryo</tissue>
    </source>
</reference>
<reference key="7">
    <citation type="journal article" date="2002" name="Genome Biol.">
        <title>A Drosophila full-length cDNA resource.</title>
        <authorList>
            <person name="Stapleton M."/>
            <person name="Carlson J.W."/>
            <person name="Brokstein P."/>
            <person name="Yu C."/>
            <person name="Champe M."/>
            <person name="George R.A."/>
            <person name="Guarin H."/>
            <person name="Kronmiller B."/>
            <person name="Pacleb J.M."/>
            <person name="Park S."/>
            <person name="Wan K.H."/>
            <person name="Rubin G.M."/>
            <person name="Celniker S.E."/>
        </authorList>
    </citation>
    <scope>NUCLEOTIDE SEQUENCE [LARGE SCALE MRNA] OF 259-994 (ISOFORM II)</scope>
    <source>
        <strain>Berkeley</strain>
        <tissue>Embryo</tissue>
    </source>
</reference>
<reference key="8">
    <citation type="journal article" date="2007" name="J. Biol. Chem.">
        <title>Nucleosomal core histones mediate dynamic regulation of poly(ADP-ribose) polymerase 1 protein binding to chromatin and induction of its enzymatic activity.</title>
        <authorList>
            <person name="Pinnola A."/>
            <person name="Naumova N."/>
            <person name="Shah M."/>
            <person name="Tulin A.V."/>
        </authorList>
    </citation>
    <scope>FUNCTION</scope>
    <scope>CATALYTIC ACTIVITY</scope>
    <scope>SUBCELLULAR LOCATION</scope>
</reference>
<dbReference type="EC" id="2.4.2.30" evidence="14"/>
<dbReference type="EC" id="2.4.2.-" evidence="1"/>
<dbReference type="EMBL" id="D13806">
    <property type="protein sequence ID" value="BAA02964.1"/>
    <property type="molecule type" value="mRNA"/>
</dbReference>
<dbReference type="EMBL" id="AF051548">
    <property type="protein sequence ID" value="AAC24518.1"/>
    <property type="molecule type" value="Genomic_DNA"/>
</dbReference>
<dbReference type="EMBL" id="AF051544">
    <property type="protein sequence ID" value="AAC24518.1"/>
    <property type="status" value="JOINED"/>
    <property type="molecule type" value="Genomic_DNA"/>
</dbReference>
<dbReference type="EMBL" id="AF051545">
    <property type="protein sequence ID" value="AAC24518.1"/>
    <property type="status" value="JOINED"/>
    <property type="molecule type" value="Genomic_DNA"/>
</dbReference>
<dbReference type="EMBL" id="AF051546">
    <property type="protein sequence ID" value="AAC24518.1"/>
    <property type="status" value="JOINED"/>
    <property type="molecule type" value="Genomic_DNA"/>
</dbReference>
<dbReference type="EMBL" id="AF051547">
    <property type="protein sequence ID" value="AAC24518.1"/>
    <property type="status" value="JOINED"/>
    <property type="molecule type" value="Genomic_DNA"/>
</dbReference>
<dbReference type="EMBL" id="AF533701">
    <property type="protein sequence ID" value="AAM93435.1"/>
    <property type="molecule type" value="mRNA"/>
</dbReference>
<dbReference type="EMBL" id="AE014297">
    <property type="protein sequence ID" value="EDP28045.1"/>
    <property type="molecule type" value="Genomic_DNA"/>
</dbReference>
<dbReference type="EMBL" id="BT015238">
    <property type="protein sequence ID" value="AAT94467.1"/>
    <property type="molecule type" value="mRNA"/>
</dbReference>
<dbReference type="EMBL" id="AY118947">
    <property type="protein sequence ID" value="AAM50807.1"/>
    <property type="status" value="ALT_INIT"/>
    <property type="molecule type" value="mRNA"/>
</dbReference>
<dbReference type="PIR" id="A47474">
    <property type="entry name" value="A47474"/>
</dbReference>
<dbReference type="RefSeq" id="NP_001104452.1">
    <molecule id="P35875-1"/>
    <property type="nucleotide sequence ID" value="NM_001110982.3"/>
</dbReference>
<dbReference type="SMR" id="P35875"/>
<dbReference type="BioGRID" id="78234">
    <property type="interactions" value="42"/>
</dbReference>
<dbReference type="DIP" id="DIP-23413N"/>
<dbReference type="FunCoup" id="P35875">
    <property type="interactions" value="527"/>
</dbReference>
<dbReference type="IntAct" id="P35875">
    <property type="interactions" value="18"/>
</dbReference>
<dbReference type="STRING" id="7227.FBpp0112608"/>
<dbReference type="PaxDb" id="7227-FBpp0112608"/>
<dbReference type="DNASU" id="3355109"/>
<dbReference type="EnsemblMetazoa" id="FBtr0113885">
    <molecule id="P35875-1"/>
    <property type="protein sequence ID" value="FBpp0112608"/>
    <property type="gene ID" value="FBgn0010247"/>
</dbReference>
<dbReference type="GeneID" id="3355109"/>
<dbReference type="KEGG" id="dme:Dmel_CG40411"/>
<dbReference type="AGR" id="FB:FBgn0010247"/>
<dbReference type="CTD" id="142"/>
<dbReference type="FlyBase" id="FBgn0010247">
    <property type="gene designation" value="Parp"/>
</dbReference>
<dbReference type="VEuPathDB" id="VectorBase:FBgn0010247"/>
<dbReference type="eggNOG" id="KOG1037">
    <property type="taxonomic scope" value="Eukaryota"/>
</dbReference>
<dbReference type="GeneTree" id="ENSGT00940000156058"/>
<dbReference type="HOGENOM" id="CLU_004841_0_1_1"/>
<dbReference type="InParanoid" id="P35875"/>
<dbReference type="OMA" id="MNFKYKY"/>
<dbReference type="OrthoDB" id="429950at2759"/>
<dbReference type="PhylomeDB" id="P35875"/>
<dbReference type="BRENDA" id="2.4.2.30">
    <property type="organism ID" value="1994"/>
</dbReference>
<dbReference type="Reactome" id="R-DME-110362">
    <property type="pathway name" value="POLB-Dependent Long Patch Base Excision Repair"/>
</dbReference>
<dbReference type="Reactome" id="R-DME-2173795">
    <property type="pathway name" value="Downregulation of SMAD2/3:SMAD4 transcriptional activity"/>
</dbReference>
<dbReference type="Reactome" id="R-DME-3108214">
    <property type="pathway name" value="SUMOylation of DNA damage response and repair proteins"/>
</dbReference>
<dbReference type="Reactome" id="R-DME-5685939">
    <property type="pathway name" value="HDR through MMEJ (alt-NHEJ)"/>
</dbReference>
<dbReference type="Reactome" id="R-DME-5696394">
    <property type="pathway name" value="DNA Damage Recognition in GG-NER"/>
</dbReference>
<dbReference type="Reactome" id="R-DME-5696395">
    <property type="pathway name" value="Formation of Incision Complex in GG-NER"/>
</dbReference>
<dbReference type="Reactome" id="R-DME-5696400">
    <property type="pathway name" value="Dual Incision in GG-NER"/>
</dbReference>
<dbReference type="BioGRID-ORCS" id="3355109">
    <property type="hits" value="0 hits in 1 CRISPR screen"/>
</dbReference>
<dbReference type="ChiTaRS" id="Parp">
    <property type="organism name" value="fly"/>
</dbReference>
<dbReference type="GenomeRNAi" id="3355109"/>
<dbReference type="PRO" id="PR:P35875"/>
<dbReference type="Proteomes" id="UP000000803">
    <property type="component" value="Chromosome 3R"/>
</dbReference>
<dbReference type="Bgee" id="FBgn0010247">
    <property type="expression patterns" value="Expressed in posterior terminal follicle cell in ovary and 268 other cell types or tissues"/>
</dbReference>
<dbReference type="GO" id="GO:0015030">
    <property type="term" value="C:Cajal body"/>
    <property type="evidence" value="ECO:0000314"/>
    <property type="project" value="FlyBase"/>
</dbReference>
<dbReference type="GO" id="GO:0005694">
    <property type="term" value="C:chromosome"/>
    <property type="evidence" value="ECO:0000314"/>
    <property type="project" value="FlyBase"/>
</dbReference>
<dbReference type="GO" id="GO:0000791">
    <property type="term" value="C:euchromatin"/>
    <property type="evidence" value="ECO:0000314"/>
    <property type="project" value="FlyBase"/>
</dbReference>
<dbReference type="GO" id="GO:0035363">
    <property type="term" value="C:histone locus body"/>
    <property type="evidence" value="ECO:0000314"/>
    <property type="project" value="FlyBase"/>
</dbReference>
<dbReference type="GO" id="GO:0005739">
    <property type="term" value="C:mitochondrion"/>
    <property type="evidence" value="ECO:0000250"/>
    <property type="project" value="FlyBase"/>
</dbReference>
<dbReference type="GO" id="GO:0005730">
    <property type="term" value="C:nucleolus"/>
    <property type="evidence" value="ECO:0000314"/>
    <property type="project" value="UniProtKB"/>
</dbReference>
<dbReference type="GO" id="GO:0090734">
    <property type="term" value="C:site of DNA damage"/>
    <property type="evidence" value="ECO:0000314"/>
    <property type="project" value="FlyBase"/>
</dbReference>
<dbReference type="GO" id="GO:0003677">
    <property type="term" value="F:DNA binding"/>
    <property type="evidence" value="ECO:0007669"/>
    <property type="project" value="UniProtKB-KW"/>
</dbReference>
<dbReference type="GO" id="GO:0042393">
    <property type="term" value="F:histone binding"/>
    <property type="evidence" value="ECO:0000353"/>
    <property type="project" value="FlyBase"/>
</dbReference>
<dbReference type="GO" id="GO:0051287">
    <property type="term" value="F:NAD binding"/>
    <property type="evidence" value="ECO:0007669"/>
    <property type="project" value="InterPro"/>
</dbReference>
<dbReference type="GO" id="GO:0003950">
    <property type="term" value="F:NAD+ poly-ADP-ribosyltransferase activity"/>
    <property type="evidence" value="ECO:0000314"/>
    <property type="project" value="FlyBase"/>
</dbReference>
<dbReference type="GO" id="GO:1990404">
    <property type="term" value="F:NAD+-protein mono-ADP-ribosyltransferase activity"/>
    <property type="evidence" value="ECO:0000314"/>
    <property type="project" value="FlyBase"/>
</dbReference>
<dbReference type="GO" id="GO:0140806">
    <property type="term" value="F:NAD+-protein-aspartate ADP-ribosyltransferase activity"/>
    <property type="evidence" value="ECO:0007669"/>
    <property type="project" value="RHEA"/>
</dbReference>
<dbReference type="GO" id="GO:0140807">
    <property type="term" value="F:NAD+-protein-glutamate ADP-ribosyltransferase activity"/>
    <property type="evidence" value="ECO:0007669"/>
    <property type="project" value="RHEA"/>
</dbReference>
<dbReference type="GO" id="GO:0140805">
    <property type="term" value="F:NAD+-protein-serine ADP-ribosyltransferase activity"/>
    <property type="evidence" value="ECO:0000314"/>
    <property type="project" value="FlyBase"/>
</dbReference>
<dbReference type="GO" id="GO:0016779">
    <property type="term" value="F:nucleotidyltransferase activity"/>
    <property type="evidence" value="ECO:0007669"/>
    <property type="project" value="UniProtKB-KW"/>
</dbReference>
<dbReference type="GO" id="GO:0008270">
    <property type="term" value="F:zinc ion binding"/>
    <property type="evidence" value="ECO:0007669"/>
    <property type="project" value="UniProtKB-KW"/>
</dbReference>
<dbReference type="GO" id="GO:0030576">
    <property type="term" value="P:Cajal body organization"/>
    <property type="evidence" value="ECO:0000315"/>
    <property type="project" value="FlyBase"/>
</dbReference>
<dbReference type="GO" id="GO:0006325">
    <property type="term" value="P:chromatin organization"/>
    <property type="evidence" value="ECO:0007669"/>
    <property type="project" value="UniProtKB-KW"/>
</dbReference>
<dbReference type="GO" id="GO:0006974">
    <property type="term" value="P:DNA damage response"/>
    <property type="evidence" value="ECO:0000314"/>
    <property type="project" value="FlyBase"/>
</dbReference>
<dbReference type="GO" id="GO:0008069">
    <property type="term" value="P:dorsal/ventral axis specification, ovarian follicular epithelium"/>
    <property type="evidence" value="ECO:0000316"/>
    <property type="project" value="FlyBase"/>
</dbReference>
<dbReference type="GO" id="GO:0006302">
    <property type="term" value="P:double-strand break repair"/>
    <property type="evidence" value="ECO:0000318"/>
    <property type="project" value="GO_Central"/>
</dbReference>
<dbReference type="GO" id="GO:0035080">
    <property type="term" value="P:heat shock-mediated polytene chromosome puffing"/>
    <property type="evidence" value="ECO:0000315"/>
    <property type="project" value="FlyBase"/>
</dbReference>
<dbReference type="GO" id="GO:0051457">
    <property type="term" value="P:maintenance of protein location in nucleus"/>
    <property type="evidence" value="ECO:0000315"/>
    <property type="project" value="FlyBase"/>
</dbReference>
<dbReference type="GO" id="GO:0007000">
    <property type="term" value="P:nucleolus organization"/>
    <property type="evidence" value="ECO:0000315"/>
    <property type="project" value="UniProtKB"/>
</dbReference>
<dbReference type="GO" id="GO:0006963">
    <property type="term" value="P:positive regulation of antibacterial peptide biosynthetic process"/>
    <property type="evidence" value="ECO:0000315"/>
    <property type="project" value="FlyBase"/>
</dbReference>
<dbReference type="GO" id="GO:0061059">
    <property type="term" value="P:positive regulation of peptidoglycan recognition protein signaling pathway"/>
    <property type="evidence" value="ECO:0000315"/>
    <property type="project" value="FlyBase"/>
</dbReference>
<dbReference type="GO" id="GO:1900182">
    <property type="term" value="P:positive regulation of protein localization to nucleus"/>
    <property type="evidence" value="ECO:0000315"/>
    <property type="project" value="CACAO"/>
</dbReference>
<dbReference type="GO" id="GO:1904867">
    <property type="term" value="P:protein localization to Cajal body"/>
    <property type="evidence" value="ECO:0000315"/>
    <property type="project" value="FlyBase"/>
</dbReference>
<dbReference type="GO" id="GO:1902570">
    <property type="term" value="P:protein localization to nucleolus"/>
    <property type="evidence" value="ECO:0000315"/>
    <property type="project" value="UniProtKB"/>
</dbReference>
<dbReference type="GO" id="GO:1902275">
    <property type="term" value="P:regulation of chromatin organization"/>
    <property type="evidence" value="ECO:0000315"/>
    <property type="project" value="FlyBase"/>
</dbReference>
<dbReference type="GO" id="GO:0043484">
    <property type="term" value="P:regulation of RNA splicing"/>
    <property type="evidence" value="ECO:0000315"/>
    <property type="project" value="FlyBase"/>
</dbReference>
<dbReference type="GO" id="GO:0042254">
    <property type="term" value="P:ribosome biogenesis"/>
    <property type="evidence" value="ECO:0000315"/>
    <property type="project" value="UniProtKB"/>
</dbReference>
<dbReference type="CDD" id="cd17747">
    <property type="entry name" value="BRCT_PARP1"/>
    <property type="match status" value="1"/>
</dbReference>
<dbReference type="CDD" id="cd01437">
    <property type="entry name" value="parp_like"/>
    <property type="match status" value="1"/>
</dbReference>
<dbReference type="CDD" id="cd08001">
    <property type="entry name" value="WGR_PARP1_like"/>
    <property type="match status" value="1"/>
</dbReference>
<dbReference type="FunFam" id="1.20.142.10:FF:000001">
    <property type="entry name" value="Poly [ADP-ribose] polymerase"/>
    <property type="match status" value="1"/>
</dbReference>
<dbReference type="FunFam" id="3.30.1740.10:FF:000006">
    <property type="entry name" value="Poly [ADP-ribose] polymerase"/>
    <property type="match status" value="1"/>
</dbReference>
<dbReference type="FunFam" id="3.40.50.10190:FF:000051">
    <property type="entry name" value="Poly [ADP-ribose] polymerase"/>
    <property type="match status" value="1"/>
</dbReference>
<dbReference type="FunFam" id="3.90.228.10:FF:000002">
    <property type="entry name" value="Poly [ADP-ribose] polymerase"/>
    <property type="match status" value="1"/>
</dbReference>
<dbReference type="Gene3D" id="1.10.20.130">
    <property type="match status" value="1"/>
</dbReference>
<dbReference type="Gene3D" id="2.20.25.630">
    <property type="match status" value="1"/>
</dbReference>
<dbReference type="Gene3D" id="3.90.228.10">
    <property type="match status" value="1"/>
</dbReference>
<dbReference type="Gene3D" id="3.40.50.10190">
    <property type="entry name" value="BRCT domain"/>
    <property type="match status" value="1"/>
</dbReference>
<dbReference type="Gene3D" id="1.20.142.10">
    <property type="entry name" value="Poly(ADP-ribose) polymerase, regulatory domain"/>
    <property type="match status" value="1"/>
</dbReference>
<dbReference type="Gene3D" id="2.20.140.10">
    <property type="entry name" value="WGR domain"/>
    <property type="match status" value="1"/>
</dbReference>
<dbReference type="Gene3D" id="3.30.1740.10">
    <property type="entry name" value="Zinc finger, PARP-type"/>
    <property type="match status" value="2"/>
</dbReference>
<dbReference type="InterPro" id="IPR050800">
    <property type="entry name" value="ARTD/PARP"/>
</dbReference>
<dbReference type="InterPro" id="IPR001357">
    <property type="entry name" value="BRCT_dom"/>
</dbReference>
<dbReference type="InterPro" id="IPR036420">
    <property type="entry name" value="BRCT_dom_sf"/>
</dbReference>
<dbReference type="InterPro" id="IPR038650">
    <property type="entry name" value="PADR1_C_dom_sf"/>
</dbReference>
<dbReference type="InterPro" id="IPR008288">
    <property type="entry name" value="PARP"/>
</dbReference>
<dbReference type="InterPro" id="IPR049296">
    <property type="entry name" value="PARP1-like_PADR1_N"/>
</dbReference>
<dbReference type="InterPro" id="IPR012982">
    <property type="entry name" value="PARP1-like_PADR1_Zn_ribbon"/>
</dbReference>
<dbReference type="InterPro" id="IPR012317">
    <property type="entry name" value="Poly(ADP-ribose)pol_cat_dom"/>
</dbReference>
<dbReference type="InterPro" id="IPR004102">
    <property type="entry name" value="Poly(ADP-ribose)pol_reg_dom"/>
</dbReference>
<dbReference type="InterPro" id="IPR036616">
    <property type="entry name" value="Poly(ADP-ribose)pol_reg_dom_sf"/>
</dbReference>
<dbReference type="InterPro" id="IPR036930">
    <property type="entry name" value="WGR_dom_sf"/>
</dbReference>
<dbReference type="InterPro" id="IPR008893">
    <property type="entry name" value="WGR_domain"/>
</dbReference>
<dbReference type="InterPro" id="IPR001510">
    <property type="entry name" value="Znf_PARP"/>
</dbReference>
<dbReference type="InterPro" id="IPR036957">
    <property type="entry name" value="Znf_PARP_sf"/>
</dbReference>
<dbReference type="PANTHER" id="PTHR10459">
    <property type="entry name" value="DNA LIGASE"/>
    <property type="match status" value="1"/>
</dbReference>
<dbReference type="PANTHER" id="PTHR10459:SF60">
    <property type="entry name" value="POLY [ADP-RIBOSE] POLYMERASE 2"/>
    <property type="match status" value="1"/>
</dbReference>
<dbReference type="Pfam" id="PF00533">
    <property type="entry name" value="BRCT"/>
    <property type="match status" value="1"/>
</dbReference>
<dbReference type="Pfam" id="PF21728">
    <property type="entry name" value="PADR1_N"/>
    <property type="match status" value="1"/>
</dbReference>
<dbReference type="Pfam" id="PF00644">
    <property type="entry name" value="PARP"/>
    <property type="match status" value="1"/>
</dbReference>
<dbReference type="Pfam" id="PF02877">
    <property type="entry name" value="PARP_reg"/>
    <property type="match status" value="1"/>
</dbReference>
<dbReference type="Pfam" id="PF05406">
    <property type="entry name" value="WGR"/>
    <property type="match status" value="1"/>
</dbReference>
<dbReference type="Pfam" id="PF00645">
    <property type="entry name" value="zf-PARP"/>
    <property type="match status" value="2"/>
</dbReference>
<dbReference type="Pfam" id="PF08063">
    <property type="entry name" value="Zn_ribbon_PADR1"/>
    <property type="match status" value="1"/>
</dbReference>
<dbReference type="PIRSF" id="PIRSF000489">
    <property type="entry name" value="NAD_ADPRT"/>
    <property type="match status" value="1"/>
</dbReference>
<dbReference type="SMART" id="SM00292">
    <property type="entry name" value="BRCT"/>
    <property type="match status" value="1"/>
</dbReference>
<dbReference type="SMART" id="SM01335">
    <property type="entry name" value="PADR1"/>
    <property type="match status" value="1"/>
</dbReference>
<dbReference type="SMART" id="SM00773">
    <property type="entry name" value="WGR"/>
    <property type="match status" value="1"/>
</dbReference>
<dbReference type="SMART" id="SM01336">
    <property type="entry name" value="zf-PARP"/>
    <property type="match status" value="2"/>
</dbReference>
<dbReference type="SUPFAM" id="SSF56399">
    <property type="entry name" value="ADP-ribosylation"/>
    <property type="match status" value="1"/>
</dbReference>
<dbReference type="SUPFAM" id="SSF52113">
    <property type="entry name" value="BRCT domain"/>
    <property type="match status" value="1"/>
</dbReference>
<dbReference type="SUPFAM" id="SSF47587">
    <property type="entry name" value="Domain of poly(ADP-ribose) polymerase"/>
    <property type="match status" value="1"/>
</dbReference>
<dbReference type="SUPFAM" id="SSF57716">
    <property type="entry name" value="Glucocorticoid receptor-like (DNA-binding domain)"/>
    <property type="match status" value="2"/>
</dbReference>
<dbReference type="SUPFAM" id="SSF142921">
    <property type="entry name" value="WGR domain-like"/>
    <property type="match status" value="1"/>
</dbReference>
<dbReference type="PROSITE" id="PS50172">
    <property type="entry name" value="BRCT"/>
    <property type="match status" value="1"/>
</dbReference>
<dbReference type="PROSITE" id="PS52007">
    <property type="entry name" value="PADR1"/>
    <property type="match status" value="1"/>
</dbReference>
<dbReference type="PROSITE" id="PS51060">
    <property type="entry name" value="PARP_ALPHA_HD"/>
    <property type="match status" value="1"/>
</dbReference>
<dbReference type="PROSITE" id="PS51059">
    <property type="entry name" value="PARP_CATALYTIC"/>
    <property type="match status" value="1"/>
</dbReference>
<dbReference type="PROSITE" id="PS51977">
    <property type="entry name" value="WGR"/>
    <property type="match status" value="1"/>
</dbReference>
<dbReference type="PROSITE" id="PS00347">
    <property type="entry name" value="ZF_PARP_1"/>
    <property type="match status" value="1"/>
</dbReference>
<dbReference type="PROSITE" id="PS50064">
    <property type="entry name" value="ZF_PARP_2"/>
    <property type="match status" value="2"/>
</dbReference>
<feature type="chain" id="PRO_0000211325" description="Poly [ADP-ribose] polymerase">
    <location>
        <begin position="1"/>
        <end position="994"/>
    </location>
</feature>
<feature type="domain" description="PADR1 zinc-binding" evidence="7">
    <location>
        <begin position="214"/>
        <end position="354"/>
    </location>
</feature>
<feature type="domain" description="BRCT" evidence="2">
    <location>
        <begin position="380"/>
        <end position="471"/>
    </location>
</feature>
<feature type="domain" description="WGR" evidence="6">
    <location>
        <begin position="525"/>
        <end position="622"/>
    </location>
</feature>
<feature type="domain" description="PARP alpha-helical" evidence="5">
    <location>
        <begin position="644"/>
        <end position="761"/>
    </location>
</feature>
<feature type="domain" description="PARP catalytic" evidence="4">
    <location>
        <begin position="770"/>
        <end position="994"/>
    </location>
</feature>
<feature type="zinc finger region" description="PARP-type 1" evidence="3">
    <location>
        <begin position="7"/>
        <end position="89"/>
    </location>
</feature>
<feature type="zinc finger region" description="PARP-type 2" evidence="3">
    <location>
        <begin position="111"/>
        <end position="200"/>
    </location>
</feature>
<feature type="region of interest" description="Disordered" evidence="8">
    <location>
        <begin position="199"/>
        <end position="225"/>
    </location>
</feature>
<feature type="region of interest" description="Zinc ribbon" evidence="7">
    <location>
        <begin position="280"/>
        <end position="323"/>
    </location>
</feature>
<feature type="region of interest" description="Automodification domain">
    <location>
        <begin position="368"/>
        <end position="507"/>
    </location>
</feature>
<feature type="short sequence motif" description="Nuclear localization signal">
    <location>
        <begin position="208"/>
        <end position="210"/>
    </location>
</feature>
<feature type="short sequence motif" description="Nuclear localization signal">
    <location>
        <begin position="223"/>
        <end position="228"/>
    </location>
</feature>
<feature type="compositionally biased region" description="Basic and acidic residues" evidence="8">
    <location>
        <begin position="200"/>
        <end position="225"/>
    </location>
</feature>
<feature type="active site" description="For poly [ADP-ribose] polymerase activity" evidence="1">
    <location>
        <position position="971"/>
    </location>
</feature>
<feature type="binding site" evidence="3">
    <location>
        <position position="19"/>
    </location>
    <ligand>
        <name>Zn(2+)</name>
        <dbReference type="ChEBI" id="CHEBI:29105"/>
        <label>1</label>
    </ligand>
</feature>
<feature type="binding site" evidence="3">
    <location>
        <position position="22"/>
    </location>
    <ligand>
        <name>Zn(2+)</name>
        <dbReference type="ChEBI" id="CHEBI:29105"/>
        <label>1</label>
    </ligand>
</feature>
<feature type="binding site" evidence="3">
    <location>
        <position position="51"/>
    </location>
    <ligand>
        <name>Zn(2+)</name>
        <dbReference type="ChEBI" id="CHEBI:29105"/>
        <label>1</label>
    </ligand>
</feature>
<feature type="binding site" evidence="3">
    <location>
        <position position="54"/>
    </location>
    <ligand>
        <name>Zn(2+)</name>
        <dbReference type="ChEBI" id="CHEBI:29105"/>
        <label>1</label>
    </ligand>
</feature>
<feature type="binding site" evidence="3">
    <location>
        <position position="123"/>
    </location>
    <ligand>
        <name>Zn(2+)</name>
        <dbReference type="ChEBI" id="CHEBI:29105"/>
        <label>2</label>
    </ligand>
</feature>
<feature type="binding site" evidence="3">
    <location>
        <position position="126"/>
    </location>
    <ligand>
        <name>Zn(2+)</name>
        <dbReference type="ChEBI" id="CHEBI:29105"/>
        <label>2</label>
    </ligand>
</feature>
<feature type="binding site" evidence="3">
    <location>
        <position position="158"/>
    </location>
    <ligand>
        <name>Zn(2+)</name>
        <dbReference type="ChEBI" id="CHEBI:29105"/>
        <label>2</label>
    </ligand>
</feature>
<feature type="binding site" evidence="3">
    <location>
        <position position="161"/>
    </location>
    <ligand>
        <name>Zn(2+)</name>
        <dbReference type="ChEBI" id="CHEBI:29105"/>
        <label>2</label>
    </ligand>
</feature>
<feature type="binding site" evidence="7">
    <location>
        <position position="285"/>
    </location>
    <ligand>
        <name>Zn(2+)</name>
        <dbReference type="ChEBI" id="CHEBI:29105"/>
        <label>3</label>
    </ligand>
</feature>
<feature type="binding site" evidence="7">
    <location>
        <position position="288"/>
    </location>
    <ligand>
        <name>Zn(2+)</name>
        <dbReference type="ChEBI" id="CHEBI:29105"/>
        <label>3</label>
    </ligand>
</feature>
<feature type="binding site" evidence="7">
    <location>
        <position position="302"/>
    </location>
    <ligand>
        <name>Zn(2+)</name>
        <dbReference type="ChEBI" id="CHEBI:29105"/>
        <label>3</label>
    </ligand>
</feature>
<feature type="binding site" evidence="7">
    <location>
        <position position="312"/>
    </location>
    <ligand>
        <name>Zn(2+)</name>
        <dbReference type="ChEBI" id="CHEBI:29105"/>
        <label>3</label>
    </ligand>
</feature>
<feature type="splice variant" id="VSP_004536" description="In isoform I." evidence="13">
    <location>
        <begin position="376"/>
        <end position="565"/>
    </location>
</feature>
<feature type="splice variant" id="VSP_013203" description="In isoform E." evidence="12">
    <original>NEYEQRD</original>
    <variation>MHFSEIH</variation>
    <location>
        <begin position="607"/>
        <end position="613"/>
    </location>
</feature>
<feature type="splice variant" id="VSP_013204" description="In isoform E." evidence="12">
    <location>
        <begin position="614"/>
        <end position="994"/>
    </location>
</feature>
<comment type="function">
    <text evidence="1 10">Poly-ADP-ribosyltransferase that mediates poly-ADP-ribosylation of proteins and plays a key role in DNA repair (PubMed:17827147). Mediates glutamate, aspartate or serine ADP-ribosylation of proteins: the ADP-D-ribosyl group of NAD(+) is transferred to the acceptor carboxyl group of target residues and further ADP-ribosyl groups are transferred to the 2'-position of the terminal adenosine moiety, building up a polymer with an average chain length of 20-30 units (By similarity). Mainly mediates glutamate and aspartate ADP-ribosylation of target proteins in absence of CG1218/HPF1 (By similarity). Following interaction with CG1218/HPF1, catalyzes serine ADP-ribosylation of target proteins; CG1218/HPF1 conferring serine specificity by completing the Parp active site (By similarity).</text>
</comment>
<comment type="function">
    <molecule>Isoform E</molecule>
    <text evidence="9">Plays a fundamental role in organizing chromatin on a global scale (PubMed:12183365). Autoregulates Parp transcription by influencing the chromatin structure of its heterochromatic environment (PubMed:12183365).</text>
</comment>
<comment type="catalytic activity">
    <reaction evidence="14">
        <text>NAD(+) + (ADP-D-ribosyl)n-acceptor = nicotinamide + (ADP-D-ribosyl)n+1-acceptor + H(+).</text>
        <dbReference type="EC" id="2.4.2.30"/>
    </reaction>
</comment>
<comment type="catalytic activity">
    <reaction evidence="1">
        <text>L-seryl-[protein] + NAD(+) = O-(ADP-D-ribosyl)-L-seryl-[protein] + nicotinamide + H(+)</text>
        <dbReference type="Rhea" id="RHEA:58232"/>
        <dbReference type="Rhea" id="RHEA-COMP:9863"/>
        <dbReference type="Rhea" id="RHEA-COMP:15091"/>
        <dbReference type="ChEBI" id="CHEBI:15378"/>
        <dbReference type="ChEBI" id="CHEBI:17154"/>
        <dbReference type="ChEBI" id="CHEBI:29999"/>
        <dbReference type="ChEBI" id="CHEBI:57540"/>
        <dbReference type="ChEBI" id="CHEBI:142556"/>
    </reaction>
    <physiologicalReaction direction="left-to-right" evidence="1">
        <dbReference type="Rhea" id="RHEA:58233"/>
    </physiologicalReaction>
</comment>
<comment type="catalytic activity">
    <reaction evidence="1">
        <text>L-aspartyl-[protein] + NAD(+) = 4-O-(ADP-D-ribosyl)-L-aspartyl-[protein] + nicotinamide</text>
        <dbReference type="Rhea" id="RHEA:54424"/>
        <dbReference type="Rhea" id="RHEA-COMP:9867"/>
        <dbReference type="Rhea" id="RHEA-COMP:13832"/>
        <dbReference type="ChEBI" id="CHEBI:17154"/>
        <dbReference type="ChEBI" id="CHEBI:29961"/>
        <dbReference type="ChEBI" id="CHEBI:57540"/>
        <dbReference type="ChEBI" id="CHEBI:138102"/>
    </reaction>
</comment>
<comment type="catalytic activity">
    <reaction evidence="1">
        <text>L-glutamyl-[protein] + NAD(+) = 5-O-(ADP-D-ribosyl)-L-glutamyl-[protein] + nicotinamide</text>
        <dbReference type="Rhea" id="RHEA:58224"/>
        <dbReference type="Rhea" id="RHEA-COMP:10208"/>
        <dbReference type="Rhea" id="RHEA-COMP:15089"/>
        <dbReference type="ChEBI" id="CHEBI:17154"/>
        <dbReference type="ChEBI" id="CHEBI:29973"/>
        <dbReference type="ChEBI" id="CHEBI:57540"/>
        <dbReference type="ChEBI" id="CHEBI:142540"/>
    </reaction>
</comment>
<comment type="interaction">
    <interactant intactId="EBI-266172">
        <id>P35875</id>
    </interactant>
    <interactant intactId="EBI-367628">
        <id>Q24368</id>
        <label>Iswi</label>
    </interactant>
    <organismsDiffer>false</organismsDiffer>
    <experiments>4</experiments>
</comment>
<comment type="subcellular location">
    <subcellularLocation>
        <location evidence="3 9 10">Nucleus</location>
    </subcellularLocation>
    <subcellularLocation>
        <location evidence="10">Chromosome</location>
    </subcellularLocation>
    <subcellularLocation>
        <location evidence="9">Nucleus</location>
        <location evidence="9">Nucleolus</location>
    </subcellularLocation>
    <text evidence="9 10">Highly enriched in nucleoli, heterochromatic chromosomal regions, and diverse euchromatic sites in the cells of most embryonic and adult tissues (PubMed:12183365). Localizes in chromatin and nucleoplasm (PubMed:17827147).</text>
</comment>
<comment type="alternative products">
    <event type="alternative splicing"/>
    <isoform>
        <id>P35875-1</id>
        <name>II</name>
        <name>B</name>
        <name>Long</name>
        <sequence type="displayed"/>
    </isoform>
    <isoform>
        <id>P35875-2</id>
        <name>I</name>
        <name>Short</name>
        <sequence type="described" ref="VSP_004536"/>
    </isoform>
    <isoform>
        <id>P35875-3</id>
        <name>E</name>
        <name>Embryonic</name>
        <sequence type="described" ref="VSP_013203 VSP_013204"/>
    </isoform>
</comment>
<comment type="tissue specificity">
    <text evidence="11">Expressed in adult female oocytes, anal plates of stage 12 embryos and in cells around the central nervous system in later embryos.</text>
</comment>
<comment type="developmental stage">
    <text evidence="9 11">Expressed both maternally and zygotically in embryos, pupae and adults. Expression is highest in embryos.</text>
</comment>
<comment type="similarity">
    <text evidence="7">Belongs to the ARTD/PARP family.</text>
</comment>
<comment type="sequence caution" evidence="13">
    <conflict type="erroneous initiation">
        <sequence resource="EMBL-CDS" id="AAM50807"/>
    </conflict>
</comment>
<organism>
    <name type="scientific">Drosophila melanogaster</name>
    <name type="common">Fruit fly</name>
    <dbReference type="NCBI Taxonomy" id="7227"/>
    <lineage>
        <taxon>Eukaryota</taxon>
        <taxon>Metazoa</taxon>
        <taxon>Ecdysozoa</taxon>
        <taxon>Arthropoda</taxon>
        <taxon>Hexapoda</taxon>
        <taxon>Insecta</taxon>
        <taxon>Pterygota</taxon>
        <taxon>Neoptera</taxon>
        <taxon>Endopterygota</taxon>
        <taxon>Diptera</taxon>
        <taxon>Brachycera</taxon>
        <taxon>Muscomorpha</taxon>
        <taxon>Ephydroidea</taxon>
        <taxon>Drosophilidae</taxon>
        <taxon>Drosophila</taxon>
        <taxon>Sophophora</taxon>
    </lineage>
</organism>
<accession>P35875</accession>
<accession>A8Y590</accession>
<accession>Q7PLT6</accession>
<accession>Q8MSB5</accession>
<accession>Q8MU87</accession>
<accession>Q9W5Q5</accession>
<accession>Q9W5S1</accession>
<protein>
    <recommendedName>
        <fullName>Poly [ADP-ribose] polymerase</fullName>
        <shortName>PARP</shortName>
        <ecNumber evidence="14">2.4.2.30</ecNumber>
    </recommendedName>
    <alternativeName>
        <fullName>NAD(+) ADP-ribosyltransferase</fullName>
        <shortName>ADPRT</shortName>
    </alternativeName>
    <alternativeName>
        <fullName>Poly[ADP-ribose] synthase</fullName>
    </alternativeName>
    <alternativeName>
        <fullName evidence="1">Protein ADP-ribosyltransferase Parp</fullName>
        <ecNumber evidence="1">2.4.2.-</ecNumber>
    </alternativeName>
</protein>
<gene>
    <name type="primary">Parp</name>
    <name type="ORF">CG40411</name>
</gene>
<keyword id="KW-0013">ADP-ribosylation</keyword>
<keyword id="KW-0025">Alternative splicing</keyword>
<keyword id="KW-0156">Chromatin regulator</keyword>
<keyword id="KW-0158">Chromosome</keyword>
<keyword id="KW-0238">DNA-binding</keyword>
<keyword id="KW-0328">Glycosyltransferase</keyword>
<keyword id="KW-0479">Metal-binding</keyword>
<keyword id="KW-0520">NAD</keyword>
<keyword id="KW-0548">Nucleotidyltransferase</keyword>
<keyword id="KW-0539">Nucleus</keyword>
<keyword id="KW-1185">Reference proteome</keyword>
<keyword id="KW-0677">Repeat</keyword>
<keyword id="KW-0808">Transferase</keyword>
<keyword id="KW-0862">Zinc</keyword>
<keyword id="KW-0863">Zinc-finger</keyword>
<evidence type="ECO:0000250" key="1">
    <source>
        <dbReference type="UniProtKB" id="P09874"/>
    </source>
</evidence>
<evidence type="ECO:0000255" key="2">
    <source>
        <dbReference type="PROSITE-ProRule" id="PRU00033"/>
    </source>
</evidence>
<evidence type="ECO:0000255" key="3">
    <source>
        <dbReference type="PROSITE-ProRule" id="PRU00264"/>
    </source>
</evidence>
<evidence type="ECO:0000255" key="4">
    <source>
        <dbReference type="PROSITE-ProRule" id="PRU00397"/>
    </source>
</evidence>
<evidence type="ECO:0000255" key="5">
    <source>
        <dbReference type="PROSITE-ProRule" id="PRU00398"/>
    </source>
</evidence>
<evidence type="ECO:0000255" key="6">
    <source>
        <dbReference type="PROSITE-ProRule" id="PRU01321"/>
    </source>
</evidence>
<evidence type="ECO:0000255" key="7">
    <source>
        <dbReference type="PROSITE-ProRule" id="PRU01351"/>
    </source>
</evidence>
<evidence type="ECO:0000256" key="8">
    <source>
        <dbReference type="SAM" id="MobiDB-lite"/>
    </source>
</evidence>
<evidence type="ECO:0000269" key="9">
    <source>
    </source>
</evidence>
<evidence type="ECO:0000269" key="10">
    <source>
    </source>
</evidence>
<evidence type="ECO:0000269" key="11">
    <source>
    </source>
</evidence>
<evidence type="ECO:0000303" key="12">
    <source>
    </source>
</evidence>
<evidence type="ECO:0000305" key="13"/>
<evidence type="ECO:0000305" key="14">
    <source>
    </source>
</evidence>
<proteinExistence type="evidence at protein level"/>
<name>PARP_DROME</name>